<reference key="1">
    <citation type="journal article" date="2005" name="J. Bacteriol.">
        <title>Insights on evolution of virulence and resistance from the complete genome analysis of an early methicillin-resistant Staphylococcus aureus strain and a biofilm-producing methicillin-resistant Staphylococcus epidermidis strain.</title>
        <authorList>
            <person name="Gill S.R."/>
            <person name="Fouts D.E."/>
            <person name="Archer G.L."/>
            <person name="Mongodin E.F."/>
            <person name="DeBoy R.T."/>
            <person name="Ravel J."/>
            <person name="Paulsen I.T."/>
            <person name="Kolonay J.F."/>
            <person name="Brinkac L.M."/>
            <person name="Beanan M.J."/>
            <person name="Dodson R.J."/>
            <person name="Daugherty S.C."/>
            <person name="Madupu R."/>
            <person name="Angiuoli S.V."/>
            <person name="Durkin A.S."/>
            <person name="Haft D.H."/>
            <person name="Vamathevan J.J."/>
            <person name="Khouri H."/>
            <person name="Utterback T.R."/>
            <person name="Lee C."/>
            <person name="Dimitrov G."/>
            <person name="Jiang L."/>
            <person name="Qin H."/>
            <person name="Weidman J."/>
            <person name="Tran K."/>
            <person name="Kang K.H."/>
            <person name="Hance I.R."/>
            <person name="Nelson K.E."/>
            <person name="Fraser C.M."/>
        </authorList>
    </citation>
    <scope>NUCLEOTIDE SEQUENCE [LARGE SCALE GENOMIC DNA]</scope>
    <source>
        <strain>COL</strain>
    </source>
</reference>
<sequence length="183" mass="20560">MLTMKDIIRDGHPTLRQKAAELELPLTKEEKETLIAMREFLVNSQDEEIAKRYGLRSGVGLAAPQINISKRMIAVLIPDDGSGKSYDYMLVNPKIVSHSVQEAYLPTGEGCLSVDDNVAGLVHRHNRITIKAKDIEGNDIQLRLKGYPAIVFQHEIDHLNGVMFYDHIDKDHPLQPHTDAVEV</sequence>
<protein>
    <recommendedName>
        <fullName evidence="1">Peptide deformylase</fullName>
        <shortName evidence="1">PDF</shortName>
        <ecNumber evidence="1">3.5.1.88</ecNumber>
    </recommendedName>
    <alternativeName>
        <fullName evidence="1">Polypeptide deformylase</fullName>
    </alternativeName>
</protein>
<feature type="chain" id="PRO_0000082838" description="Peptide deformylase">
    <location>
        <begin position="1"/>
        <end position="183"/>
    </location>
</feature>
<feature type="active site" evidence="1">
    <location>
        <position position="155"/>
    </location>
</feature>
<feature type="binding site" evidence="1">
    <location>
        <position position="111"/>
    </location>
    <ligand>
        <name>Fe cation</name>
        <dbReference type="ChEBI" id="CHEBI:24875"/>
    </ligand>
</feature>
<feature type="binding site" evidence="1">
    <location>
        <position position="154"/>
    </location>
    <ligand>
        <name>Fe cation</name>
        <dbReference type="ChEBI" id="CHEBI:24875"/>
    </ligand>
</feature>
<feature type="binding site" evidence="1">
    <location>
        <position position="158"/>
    </location>
    <ligand>
        <name>Fe cation</name>
        <dbReference type="ChEBI" id="CHEBI:24875"/>
    </ligand>
</feature>
<feature type="helix" evidence="2">
    <location>
        <begin position="4"/>
        <end position="6"/>
    </location>
</feature>
<feature type="helix" evidence="2">
    <location>
        <begin position="13"/>
        <end position="16"/>
    </location>
</feature>
<feature type="helix" evidence="2">
    <location>
        <begin position="28"/>
        <end position="44"/>
    </location>
</feature>
<feature type="helix" evidence="2">
    <location>
        <begin position="47"/>
        <end position="52"/>
    </location>
</feature>
<feature type="strand" evidence="2">
    <location>
        <begin position="59"/>
        <end position="62"/>
    </location>
</feature>
<feature type="helix" evidence="2">
    <location>
        <begin position="63"/>
        <end position="66"/>
    </location>
</feature>
<feature type="strand" evidence="2">
    <location>
        <begin position="70"/>
        <end position="77"/>
    </location>
</feature>
<feature type="strand" evidence="2">
    <location>
        <begin position="81"/>
        <end position="83"/>
    </location>
</feature>
<feature type="strand" evidence="2">
    <location>
        <begin position="86"/>
        <end position="98"/>
    </location>
</feature>
<feature type="strand" evidence="2">
    <location>
        <begin position="100"/>
        <end position="104"/>
    </location>
</feature>
<feature type="strand" evidence="2">
    <location>
        <begin position="124"/>
        <end position="133"/>
    </location>
</feature>
<feature type="strand" evidence="2">
    <location>
        <begin position="139"/>
        <end position="146"/>
    </location>
</feature>
<feature type="helix" evidence="2">
    <location>
        <begin position="147"/>
        <end position="159"/>
    </location>
</feature>
<feature type="helix" evidence="2">
    <location>
        <begin position="164"/>
        <end position="167"/>
    </location>
</feature>
<feature type="strand" evidence="2">
    <location>
        <begin position="170"/>
        <end position="172"/>
    </location>
</feature>
<name>DEF_STAAC</name>
<proteinExistence type="evidence at protein level"/>
<comment type="function">
    <text evidence="1">Removes the formyl group from the N-terminal Met of newly synthesized proteins. Requires at least a dipeptide for an efficient rate of reaction. N-terminal L-methionine is a prerequisite for activity but the enzyme has broad specificity at other positions.</text>
</comment>
<comment type="catalytic activity">
    <reaction evidence="1">
        <text>N-terminal N-formyl-L-methionyl-[peptide] + H2O = N-terminal L-methionyl-[peptide] + formate</text>
        <dbReference type="Rhea" id="RHEA:24420"/>
        <dbReference type="Rhea" id="RHEA-COMP:10639"/>
        <dbReference type="Rhea" id="RHEA-COMP:10640"/>
        <dbReference type="ChEBI" id="CHEBI:15377"/>
        <dbReference type="ChEBI" id="CHEBI:15740"/>
        <dbReference type="ChEBI" id="CHEBI:49298"/>
        <dbReference type="ChEBI" id="CHEBI:64731"/>
        <dbReference type="EC" id="3.5.1.88"/>
    </reaction>
</comment>
<comment type="cofactor">
    <cofactor evidence="1">
        <name>Fe(2+)</name>
        <dbReference type="ChEBI" id="CHEBI:29033"/>
    </cofactor>
    <text evidence="1">Binds 1 Fe(2+) ion.</text>
</comment>
<comment type="similarity">
    <text evidence="1">Belongs to the polypeptide deformylase family.</text>
</comment>
<organism>
    <name type="scientific">Staphylococcus aureus (strain COL)</name>
    <dbReference type="NCBI Taxonomy" id="93062"/>
    <lineage>
        <taxon>Bacteria</taxon>
        <taxon>Bacillati</taxon>
        <taxon>Bacillota</taxon>
        <taxon>Bacilli</taxon>
        <taxon>Bacillales</taxon>
        <taxon>Staphylococcaceae</taxon>
        <taxon>Staphylococcus</taxon>
    </lineage>
</organism>
<accession>Q5HGZ3</accession>
<evidence type="ECO:0000255" key="1">
    <source>
        <dbReference type="HAMAP-Rule" id="MF_00163"/>
    </source>
</evidence>
<evidence type="ECO:0007829" key="2">
    <source>
        <dbReference type="PDB" id="3U7K"/>
    </source>
</evidence>
<dbReference type="EC" id="3.5.1.88" evidence="1"/>
<dbReference type="EMBL" id="CP000046">
    <property type="protein sequence ID" value="AAW37980.1"/>
    <property type="molecule type" value="Genomic_DNA"/>
</dbReference>
<dbReference type="RefSeq" id="WP_000957036.1">
    <property type="nucleotide sequence ID" value="NZ_JBGOFO010000002.1"/>
</dbReference>
<dbReference type="PDB" id="3U7K">
    <property type="method" value="X-ray"/>
    <property type="resolution" value="1.90 A"/>
    <property type="chains" value="A=1-183"/>
</dbReference>
<dbReference type="PDB" id="3U7L">
    <property type="method" value="X-ray"/>
    <property type="resolution" value="2.01 A"/>
    <property type="chains" value="A=1-183"/>
</dbReference>
<dbReference type="PDB" id="3U7M">
    <property type="method" value="X-ray"/>
    <property type="resolution" value="2.15 A"/>
    <property type="chains" value="A=1-183"/>
</dbReference>
<dbReference type="PDB" id="3U7N">
    <property type="method" value="X-ray"/>
    <property type="resolution" value="2.30 A"/>
    <property type="chains" value="A=1-183"/>
</dbReference>
<dbReference type="PDBsum" id="3U7K"/>
<dbReference type="PDBsum" id="3U7L"/>
<dbReference type="PDBsum" id="3U7M"/>
<dbReference type="PDBsum" id="3U7N"/>
<dbReference type="BMRB" id="Q5HGZ3"/>
<dbReference type="SMR" id="Q5HGZ3"/>
<dbReference type="KEGG" id="sac:SACOL1100"/>
<dbReference type="HOGENOM" id="CLU_061901_4_0_9"/>
<dbReference type="EvolutionaryTrace" id="Q5HGZ3"/>
<dbReference type="Proteomes" id="UP000000530">
    <property type="component" value="Chromosome"/>
</dbReference>
<dbReference type="GO" id="GO:0046872">
    <property type="term" value="F:metal ion binding"/>
    <property type="evidence" value="ECO:0007669"/>
    <property type="project" value="UniProtKB-KW"/>
</dbReference>
<dbReference type="GO" id="GO:0042586">
    <property type="term" value="F:peptide deformylase activity"/>
    <property type="evidence" value="ECO:0007669"/>
    <property type="project" value="UniProtKB-UniRule"/>
</dbReference>
<dbReference type="GO" id="GO:0043686">
    <property type="term" value="P:co-translational protein modification"/>
    <property type="evidence" value="ECO:0007669"/>
    <property type="project" value="TreeGrafter"/>
</dbReference>
<dbReference type="GO" id="GO:0006412">
    <property type="term" value="P:translation"/>
    <property type="evidence" value="ECO:0007669"/>
    <property type="project" value="UniProtKB-UniRule"/>
</dbReference>
<dbReference type="CDD" id="cd00487">
    <property type="entry name" value="Pep_deformylase"/>
    <property type="match status" value="1"/>
</dbReference>
<dbReference type="FunFam" id="3.90.45.10:FF:000002">
    <property type="entry name" value="Peptide deformylase"/>
    <property type="match status" value="1"/>
</dbReference>
<dbReference type="Gene3D" id="3.90.45.10">
    <property type="entry name" value="Peptide deformylase"/>
    <property type="match status" value="1"/>
</dbReference>
<dbReference type="HAMAP" id="MF_00163">
    <property type="entry name" value="Pep_deformylase"/>
    <property type="match status" value="1"/>
</dbReference>
<dbReference type="InterPro" id="IPR023635">
    <property type="entry name" value="Peptide_deformylase"/>
</dbReference>
<dbReference type="InterPro" id="IPR036821">
    <property type="entry name" value="Peptide_deformylase_sf"/>
</dbReference>
<dbReference type="NCBIfam" id="TIGR00079">
    <property type="entry name" value="pept_deformyl"/>
    <property type="match status" value="1"/>
</dbReference>
<dbReference type="PANTHER" id="PTHR10458">
    <property type="entry name" value="PEPTIDE DEFORMYLASE"/>
    <property type="match status" value="1"/>
</dbReference>
<dbReference type="PANTHER" id="PTHR10458:SF8">
    <property type="entry name" value="PEPTIDE DEFORMYLASE 2"/>
    <property type="match status" value="1"/>
</dbReference>
<dbReference type="Pfam" id="PF01327">
    <property type="entry name" value="Pep_deformylase"/>
    <property type="match status" value="1"/>
</dbReference>
<dbReference type="PIRSF" id="PIRSF004749">
    <property type="entry name" value="Pep_def"/>
    <property type="match status" value="1"/>
</dbReference>
<dbReference type="PRINTS" id="PR01576">
    <property type="entry name" value="PDEFORMYLASE"/>
</dbReference>
<dbReference type="SUPFAM" id="SSF56420">
    <property type="entry name" value="Peptide deformylase"/>
    <property type="match status" value="1"/>
</dbReference>
<keyword id="KW-0002">3D-structure</keyword>
<keyword id="KW-0378">Hydrolase</keyword>
<keyword id="KW-0408">Iron</keyword>
<keyword id="KW-0479">Metal-binding</keyword>
<keyword id="KW-0648">Protein biosynthesis</keyword>
<gene>
    <name evidence="1" type="primary">def</name>
    <name type="synonym">def1</name>
    <name type="synonym">pdf1</name>
    <name type="ordered locus">SACOL1100</name>
</gene>